<gene>
    <name evidence="1" type="primary">fmt</name>
    <name type="ordered locus">YPO0241</name>
    <name type="ordered locus">y4022</name>
    <name type="ordered locus">YP_0239</name>
</gene>
<sequence>MSDSLRIIFAGTPDFAARHLGALLSSQHKIVGVFTQPDRPAGRGNKLTPSPVKILAEHHGIPVFQPKSLRPEENQHLVADLNADIMVVVAYGLILPAAVLAMPRLGCINVHGSLLPRWRGAAPIQRSVWAGDEKTGITIMQMDIGLDTGAMLHKIECAIQPEDTSATLYDKLAQLGPQGLLITLQQLAAGTALAEVQNETQATYAEKLSKEEAKLDWTLSATQLERCIRAFNPWPVSYFIVDEQPIKVWQAQVLPAGEDAEPGTIIHADKHGIQVATADGVLNITQLQPAGKKAMSAADLLNSRREWFIPGSQLV</sequence>
<protein>
    <recommendedName>
        <fullName evidence="1">Methionyl-tRNA formyltransferase</fullName>
        <ecNumber evidence="1">2.1.2.9</ecNumber>
    </recommendedName>
</protein>
<accession>Q8ZJ80</accession>
<accession>Q0WK66</accession>
<proteinExistence type="evidence at protein level"/>
<reference key="1">
    <citation type="journal article" date="2001" name="Nature">
        <title>Genome sequence of Yersinia pestis, the causative agent of plague.</title>
        <authorList>
            <person name="Parkhill J."/>
            <person name="Wren B.W."/>
            <person name="Thomson N.R."/>
            <person name="Titball R.W."/>
            <person name="Holden M.T.G."/>
            <person name="Prentice M.B."/>
            <person name="Sebaihia M."/>
            <person name="James K.D."/>
            <person name="Churcher C.M."/>
            <person name="Mungall K.L."/>
            <person name="Baker S."/>
            <person name="Basham D."/>
            <person name="Bentley S.D."/>
            <person name="Brooks K."/>
            <person name="Cerdeno-Tarraga A.-M."/>
            <person name="Chillingworth T."/>
            <person name="Cronin A."/>
            <person name="Davies R.M."/>
            <person name="Davis P."/>
            <person name="Dougan G."/>
            <person name="Feltwell T."/>
            <person name="Hamlin N."/>
            <person name="Holroyd S."/>
            <person name="Jagels K."/>
            <person name="Karlyshev A.V."/>
            <person name="Leather S."/>
            <person name="Moule S."/>
            <person name="Oyston P.C.F."/>
            <person name="Quail M.A."/>
            <person name="Rutherford K.M."/>
            <person name="Simmonds M."/>
            <person name="Skelton J."/>
            <person name="Stevens K."/>
            <person name="Whitehead S."/>
            <person name="Barrell B.G."/>
        </authorList>
    </citation>
    <scope>NUCLEOTIDE SEQUENCE [LARGE SCALE GENOMIC DNA]</scope>
    <source>
        <strain>CO-92 / Biovar Orientalis</strain>
    </source>
</reference>
<reference key="2">
    <citation type="journal article" date="2002" name="J. Bacteriol.">
        <title>Genome sequence of Yersinia pestis KIM.</title>
        <authorList>
            <person name="Deng W."/>
            <person name="Burland V."/>
            <person name="Plunkett G. III"/>
            <person name="Boutin A."/>
            <person name="Mayhew G.F."/>
            <person name="Liss P."/>
            <person name="Perna N.T."/>
            <person name="Rose D.J."/>
            <person name="Mau B."/>
            <person name="Zhou S."/>
            <person name="Schwartz D.C."/>
            <person name="Fetherston J.D."/>
            <person name="Lindler L.E."/>
            <person name="Brubaker R.R."/>
            <person name="Plano G.V."/>
            <person name="Straley S.C."/>
            <person name="McDonough K.A."/>
            <person name="Nilles M.L."/>
            <person name="Matson J.S."/>
            <person name="Blattner F.R."/>
            <person name="Perry R.D."/>
        </authorList>
    </citation>
    <scope>NUCLEOTIDE SEQUENCE [LARGE SCALE GENOMIC DNA]</scope>
    <source>
        <strain>KIM10+ / Biovar Mediaevalis</strain>
    </source>
</reference>
<reference key="3">
    <citation type="journal article" date="2004" name="DNA Res.">
        <title>Complete genome sequence of Yersinia pestis strain 91001, an isolate avirulent to humans.</title>
        <authorList>
            <person name="Song Y."/>
            <person name="Tong Z."/>
            <person name="Wang J."/>
            <person name="Wang L."/>
            <person name="Guo Z."/>
            <person name="Han Y."/>
            <person name="Zhang J."/>
            <person name="Pei D."/>
            <person name="Zhou D."/>
            <person name="Qin H."/>
            <person name="Pang X."/>
            <person name="Han Y."/>
            <person name="Zhai J."/>
            <person name="Li M."/>
            <person name="Cui B."/>
            <person name="Qi Z."/>
            <person name="Jin L."/>
            <person name="Dai R."/>
            <person name="Chen F."/>
            <person name="Li S."/>
            <person name="Ye C."/>
            <person name="Du Z."/>
            <person name="Lin W."/>
            <person name="Wang J."/>
            <person name="Yu J."/>
            <person name="Yang H."/>
            <person name="Wang J."/>
            <person name="Huang P."/>
            <person name="Yang R."/>
        </authorList>
    </citation>
    <scope>NUCLEOTIDE SEQUENCE [LARGE SCALE GENOMIC DNA]</scope>
    <source>
        <strain>91001 / Biovar Mediaevalis</strain>
    </source>
</reference>
<comment type="function">
    <text evidence="1">Attaches a formyl group to the free amino group of methionyl-tRNA(fMet). The formyl group appears to play a dual role in the initiator identity of N-formylmethionyl-tRNA by promoting its recognition by IF2 and preventing the misappropriation of this tRNA by the elongation apparatus.</text>
</comment>
<comment type="catalytic activity">
    <reaction evidence="1">
        <text>L-methionyl-tRNA(fMet) + (6R)-10-formyltetrahydrofolate = N-formyl-L-methionyl-tRNA(fMet) + (6S)-5,6,7,8-tetrahydrofolate + H(+)</text>
        <dbReference type="Rhea" id="RHEA:24380"/>
        <dbReference type="Rhea" id="RHEA-COMP:9952"/>
        <dbReference type="Rhea" id="RHEA-COMP:9953"/>
        <dbReference type="ChEBI" id="CHEBI:15378"/>
        <dbReference type="ChEBI" id="CHEBI:57453"/>
        <dbReference type="ChEBI" id="CHEBI:78530"/>
        <dbReference type="ChEBI" id="CHEBI:78844"/>
        <dbReference type="ChEBI" id="CHEBI:195366"/>
        <dbReference type="EC" id="2.1.2.9"/>
    </reaction>
</comment>
<comment type="similarity">
    <text evidence="1">Belongs to the Fmt family.</text>
</comment>
<feature type="chain" id="PRO_0000083093" description="Methionyl-tRNA formyltransferase">
    <location>
        <begin position="1"/>
        <end position="315"/>
    </location>
</feature>
<feature type="binding site" evidence="1">
    <location>
        <begin position="113"/>
        <end position="116"/>
    </location>
    <ligand>
        <name>(6S)-5,6,7,8-tetrahydrofolate</name>
        <dbReference type="ChEBI" id="CHEBI:57453"/>
    </ligand>
</feature>
<feature type="strand" evidence="2">
    <location>
        <begin position="6"/>
        <end position="11"/>
    </location>
</feature>
<feature type="helix" evidence="2">
    <location>
        <begin position="14"/>
        <end position="25"/>
    </location>
</feature>
<feature type="strand" evidence="2">
    <location>
        <begin position="26"/>
        <end position="34"/>
    </location>
</feature>
<feature type="helix" evidence="2">
    <location>
        <begin position="51"/>
        <end position="58"/>
    </location>
</feature>
<feature type="helix" evidence="2">
    <location>
        <begin position="76"/>
        <end position="80"/>
    </location>
</feature>
<feature type="strand" evidence="2">
    <location>
        <begin position="84"/>
        <end position="90"/>
    </location>
</feature>
<feature type="helix" evidence="2">
    <location>
        <begin position="97"/>
        <end position="100"/>
    </location>
</feature>
<feature type="strand" evidence="2">
    <location>
        <begin position="107"/>
        <end position="113"/>
    </location>
</feature>
<feature type="turn" evidence="2">
    <location>
        <begin position="115"/>
        <end position="118"/>
    </location>
</feature>
<feature type="strand" evidence="2">
    <location>
        <begin position="119"/>
        <end position="121"/>
    </location>
</feature>
<feature type="helix" evidence="2">
    <location>
        <begin position="123"/>
        <end position="129"/>
    </location>
</feature>
<feature type="strand" evidence="2">
    <location>
        <begin position="133"/>
        <end position="141"/>
    </location>
</feature>
<feature type="strand" evidence="2">
    <location>
        <begin position="144"/>
        <end position="147"/>
    </location>
</feature>
<feature type="strand" evidence="2">
    <location>
        <begin position="151"/>
        <end position="158"/>
    </location>
</feature>
<feature type="helix" evidence="2">
    <location>
        <begin position="165"/>
        <end position="188"/>
    </location>
</feature>
<feature type="helix" evidence="2">
    <location>
        <begin position="199"/>
        <end position="201"/>
    </location>
</feature>
<feature type="turn" evidence="2">
    <location>
        <begin position="210"/>
        <end position="213"/>
    </location>
</feature>
<feature type="helix" evidence="2">
    <location>
        <begin position="221"/>
        <end position="230"/>
    </location>
</feature>
<feature type="turn" evidence="2">
    <location>
        <begin position="231"/>
        <end position="235"/>
    </location>
</feature>
<feature type="strand" evidence="2">
    <location>
        <begin position="238"/>
        <end position="241"/>
    </location>
</feature>
<feature type="strand" evidence="2">
    <location>
        <begin position="244"/>
        <end position="254"/>
    </location>
</feature>
<feature type="strand" evidence="2">
    <location>
        <begin position="264"/>
        <end position="269"/>
    </location>
</feature>
<feature type="strand" evidence="2">
    <location>
        <begin position="272"/>
        <end position="276"/>
    </location>
</feature>
<feature type="strand" evidence="2">
    <location>
        <begin position="278"/>
        <end position="289"/>
    </location>
</feature>
<feature type="helix" evidence="2">
    <location>
        <begin position="297"/>
        <end position="303"/>
    </location>
</feature>
<feature type="helix" evidence="2">
    <location>
        <begin position="305"/>
        <end position="308"/>
    </location>
</feature>
<organism>
    <name type="scientific">Yersinia pestis</name>
    <dbReference type="NCBI Taxonomy" id="632"/>
    <lineage>
        <taxon>Bacteria</taxon>
        <taxon>Pseudomonadati</taxon>
        <taxon>Pseudomonadota</taxon>
        <taxon>Gammaproteobacteria</taxon>
        <taxon>Enterobacterales</taxon>
        <taxon>Yersiniaceae</taxon>
        <taxon>Yersinia</taxon>
    </lineage>
</organism>
<dbReference type="EC" id="2.1.2.9" evidence="1"/>
<dbReference type="EMBL" id="AL590842">
    <property type="protein sequence ID" value="CAL18924.1"/>
    <property type="molecule type" value="Genomic_DNA"/>
</dbReference>
<dbReference type="EMBL" id="AE009952">
    <property type="protein sequence ID" value="AAM87566.1"/>
    <property type="molecule type" value="Genomic_DNA"/>
</dbReference>
<dbReference type="EMBL" id="AE017042">
    <property type="protein sequence ID" value="AAS60515.1"/>
    <property type="molecule type" value="Genomic_DNA"/>
</dbReference>
<dbReference type="PIR" id="AB0030">
    <property type="entry name" value="AB0030"/>
</dbReference>
<dbReference type="RefSeq" id="WP_002209020.1">
    <property type="nucleotide sequence ID" value="NZ_WUCM01000078.1"/>
</dbReference>
<dbReference type="RefSeq" id="YP_002345322.1">
    <property type="nucleotide sequence ID" value="NC_003143.1"/>
</dbReference>
<dbReference type="PDB" id="3R8X">
    <property type="method" value="X-ray"/>
    <property type="resolution" value="2.26 A"/>
    <property type="chains" value="A=1-315"/>
</dbReference>
<dbReference type="PDBsum" id="3R8X"/>
<dbReference type="SMR" id="Q8ZJ80"/>
<dbReference type="STRING" id="214092.YPO0241"/>
<dbReference type="PaxDb" id="214092-YPO0241"/>
<dbReference type="DNASU" id="1148969"/>
<dbReference type="EnsemblBacteria" id="AAS60515">
    <property type="protein sequence ID" value="AAS60515"/>
    <property type="gene ID" value="YP_0239"/>
</dbReference>
<dbReference type="GeneID" id="57974363"/>
<dbReference type="KEGG" id="ype:YPO0241"/>
<dbReference type="KEGG" id="ypk:y4022"/>
<dbReference type="KEGG" id="ypm:YP_0239"/>
<dbReference type="PATRIC" id="fig|214092.21.peg.469"/>
<dbReference type="eggNOG" id="COG0223">
    <property type="taxonomic scope" value="Bacteria"/>
</dbReference>
<dbReference type="HOGENOM" id="CLU_033347_1_2_6"/>
<dbReference type="OMA" id="GITTMLM"/>
<dbReference type="OrthoDB" id="9802815at2"/>
<dbReference type="EvolutionaryTrace" id="Q8ZJ80"/>
<dbReference type="Proteomes" id="UP000000815">
    <property type="component" value="Chromosome"/>
</dbReference>
<dbReference type="Proteomes" id="UP000001019">
    <property type="component" value="Chromosome"/>
</dbReference>
<dbReference type="Proteomes" id="UP000002490">
    <property type="component" value="Chromosome"/>
</dbReference>
<dbReference type="GO" id="GO:0005829">
    <property type="term" value="C:cytosol"/>
    <property type="evidence" value="ECO:0000318"/>
    <property type="project" value="GO_Central"/>
</dbReference>
<dbReference type="GO" id="GO:0004479">
    <property type="term" value="F:methionyl-tRNA formyltransferase activity"/>
    <property type="evidence" value="ECO:0000318"/>
    <property type="project" value="GO_Central"/>
</dbReference>
<dbReference type="GO" id="GO:0071951">
    <property type="term" value="P:conversion of methionyl-tRNA to N-formyl-methionyl-tRNA"/>
    <property type="evidence" value="ECO:0000318"/>
    <property type="project" value="GO_Central"/>
</dbReference>
<dbReference type="CDD" id="cd08646">
    <property type="entry name" value="FMT_core_Met-tRNA-FMT_N"/>
    <property type="match status" value="1"/>
</dbReference>
<dbReference type="CDD" id="cd08704">
    <property type="entry name" value="Met_tRNA_FMT_C"/>
    <property type="match status" value="1"/>
</dbReference>
<dbReference type="FunFam" id="3.10.25.10:FF:000001">
    <property type="entry name" value="Methionyl-tRNA formyltransferase"/>
    <property type="match status" value="1"/>
</dbReference>
<dbReference type="FunFam" id="3.40.50.12230:FF:000001">
    <property type="entry name" value="Methionyl-tRNA formyltransferase"/>
    <property type="match status" value="1"/>
</dbReference>
<dbReference type="FunFam" id="3.40.50.170:FF:000003">
    <property type="entry name" value="Methionyl-tRNA formyltransferase"/>
    <property type="match status" value="1"/>
</dbReference>
<dbReference type="Gene3D" id="3.10.25.10">
    <property type="entry name" value="Formyl transferase, C-terminal domain"/>
    <property type="match status" value="1"/>
</dbReference>
<dbReference type="Gene3D" id="3.40.50.170">
    <property type="entry name" value="Formyl transferase, N-terminal domain"/>
    <property type="match status" value="1"/>
</dbReference>
<dbReference type="HAMAP" id="MF_00182">
    <property type="entry name" value="Formyl_trans"/>
    <property type="match status" value="1"/>
</dbReference>
<dbReference type="InterPro" id="IPR005794">
    <property type="entry name" value="Fmt"/>
</dbReference>
<dbReference type="InterPro" id="IPR005793">
    <property type="entry name" value="Formyl_trans_C"/>
</dbReference>
<dbReference type="InterPro" id="IPR037022">
    <property type="entry name" value="Formyl_trans_C_sf"/>
</dbReference>
<dbReference type="InterPro" id="IPR002376">
    <property type="entry name" value="Formyl_transf_N"/>
</dbReference>
<dbReference type="InterPro" id="IPR036477">
    <property type="entry name" value="Formyl_transf_N_sf"/>
</dbReference>
<dbReference type="InterPro" id="IPR011034">
    <property type="entry name" value="Formyl_transferase-like_C_sf"/>
</dbReference>
<dbReference type="InterPro" id="IPR001555">
    <property type="entry name" value="GART_AS"/>
</dbReference>
<dbReference type="InterPro" id="IPR044135">
    <property type="entry name" value="Met-tRNA-FMT_C"/>
</dbReference>
<dbReference type="InterPro" id="IPR041711">
    <property type="entry name" value="Met-tRNA-FMT_N"/>
</dbReference>
<dbReference type="NCBIfam" id="TIGR00460">
    <property type="entry name" value="fmt"/>
    <property type="match status" value="1"/>
</dbReference>
<dbReference type="PANTHER" id="PTHR11138">
    <property type="entry name" value="METHIONYL-TRNA FORMYLTRANSFERASE"/>
    <property type="match status" value="1"/>
</dbReference>
<dbReference type="PANTHER" id="PTHR11138:SF5">
    <property type="entry name" value="METHIONYL-TRNA FORMYLTRANSFERASE, MITOCHONDRIAL"/>
    <property type="match status" value="1"/>
</dbReference>
<dbReference type="Pfam" id="PF02911">
    <property type="entry name" value="Formyl_trans_C"/>
    <property type="match status" value="1"/>
</dbReference>
<dbReference type="Pfam" id="PF00551">
    <property type="entry name" value="Formyl_trans_N"/>
    <property type="match status" value="1"/>
</dbReference>
<dbReference type="SUPFAM" id="SSF50486">
    <property type="entry name" value="FMT C-terminal domain-like"/>
    <property type="match status" value="1"/>
</dbReference>
<dbReference type="SUPFAM" id="SSF53328">
    <property type="entry name" value="Formyltransferase"/>
    <property type="match status" value="1"/>
</dbReference>
<dbReference type="PROSITE" id="PS00373">
    <property type="entry name" value="GART"/>
    <property type="match status" value="1"/>
</dbReference>
<evidence type="ECO:0000255" key="1">
    <source>
        <dbReference type="HAMAP-Rule" id="MF_00182"/>
    </source>
</evidence>
<evidence type="ECO:0007829" key="2">
    <source>
        <dbReference type="PDB" id="3R8X"/>
    </source>
</evidence>
<name>FMT_YERPE</name>
<keyword id="KW-0002">3D-structure</keyword>
<keyword id="KW-0648">Protein biosynthesis</keyword>
<keyword id="KW-1185">Reference proteome</keyword>
<keyword id="KW-0808">Transferase</keyword>